<dbReference type="EMBL" id="BC130100">
    <property type="protein sequence ID" value="AAI30101.1"/>
    <property type="molecule type" value="mRNA"/>
</dbReference>
<dbReference type="RefSeq" id="NP_001091226.1">
    <property type="nucleotide sequence ID" value="NM_001097757.1"/>
</dbReference>
<dbReference type="SMR" id="A1L3H4"/>
<dbReference type="BioGRID" id="674286">
    <property type="interactions" value="1"/>
</dbReference>
<dbReference type="IntAct" id="A1L3H4">
    <property type="interactions" value="1"/>
</dbReference>
<dbReference type="DNASU" id="100037008"/>
<dbReference type="GeneID" id="100037008"/>
<dbReference type="KEGG" id="xla:100037008"/>
<dbReference type="AGR" id="Xenbase:XB-GENE-919989"/>
<dbReference type="CTD" id="100037008"/>
<dbReference type="Xenbase" id="XB-GENE-919989">
    <property type="gene designation" value="bloc1s5.L"/>
</dbReference>
<dbReference type="OMA" id="MHGNLNE"/>
<dbReference type="OrthoDB" id="18964at2759"/>
<dbReference type="Proteomes" id="UP000186698">
    <property type="component" value="Chromosome 6L"/>
</dbReference>
<dbReference type="Bgee" id="100037008">
    <property type="expression patterns" value="Expressed in blastula and 19 other cell types or tissues"/>
</dbReference>
<dbReference type="GO" id="GO:0031083">
    <property type="term" value="C:BLOC-1 complex"/>
    <property type="evidence" value="ECO:0000318"/>
    <property type="project" value="GO_Central"/>
</dbReference>
<dbReference type="GO" id="GO:0030133">
    <property type="term" value="C:transport vesicle"/>
    <property type="evidence" value="ECO:0007669"/>
    <property type="project" value="InterPro"/>
</dbReference>
<dbReference type="InterPro" id="IPR017243">
    <property type="entry name" value="Bloc1s5"/>
</dbReference>
<dbReference type="PANTHER" id="PTHR31784">
    <property type="entry name" value="BIOGENESIS OF LYSOSOME-RELATED ORGANELLES COMPLEX 1 SUBUNIT 5"/>
    <property type="match status" value="1"/>
</dbReference>
<dbReference type="PANTHER" id="PTHR31784:SF2">
    <property type="entry name" value="BIOGENESIS OF LYSOSOME-RELATED ORGANELLES COMPLEX 1 SUBUNIT 5"/>
    <property type="match status" value="1"/>
</dbReference>
<dbReference type="Pfam" id="PF14942">
    <property type="entry name" value="Muted"/>
    <property type="match status" value="1"/>
</dbReference>
<dbReference type="PIRSF" id="PIRSF037610">
    <property type="entry name" value="BLOC-1_complex_muted_subunit"/>
    <property type="match status" value="1"/>
</dbReference>
<proteinExistence type="evidence at transcript level"/>
<gene>
    <name type="primary">bloc1s5</name>
    <name type="synonym">muted</name>
</gene>
<sequence length="188" mass="21647">MSSSSSSSSPVKSTGSPFIQSLKPRESLASMGSATQLVIKDIGEIHSRLLDHRPVIQGETRYFIKEFEEKRGLREMRVLENLRNSISETNEHALPKCTSVMQDQLASVLKKLETANHTIHRLQQRELENAKRSASKAGEEKMRAHWEPVMKEQEQKRQTVDEEHRKAVMRLKEQYVTMDKELSKQISF</sequence>
<protein>
    <recommendedName>
        <fullName>Biogenesis of lysosome-related organelles complex 1 subunit 5</fullName>
        <shortName>BLOC-1 subunit 5</shortName>
    </recommendedName>
    <alternativeName>
        <fullName>Protein Muted homolog</fullName>
    </alternativeName>
</protein>
<evidence type="ECO:0000250" key="1"/>
<evidence type="ECO:0000255" key="2"/>
<evidence type="ECO:0000256" key="3">
    <source>
        <dbReference type="SAM" id="MobiDB-lite"/>
    </source>
</evidence>
<evidence type="ECO:0000305" key="4"/>
<organism>
    <name type="scientific">Xenopus laevis</name>
    <name type="common">African clawed frog</name>
    <dbReference type="NCBI Taxonomy" id="8355"/>
    <lineage>
        <taxon>Eukaryota</taxon>
        <taxon>Metazoa</taxon>
        <taxon>Chordata</taxon>
        <taxon>Craniata</taxon>
        <taxon>Vertebrata</taxon>
        <taxon>Euteleostomi</taxon>
        <taxon>Amphibia</taxon>
        <taxon>Batrachia</taxon>
        <taxon>Anura</taxon>
        <taxon>Pipoidea</taxon>
        <taxon>Pipidae</taxon>
        <taxon>Xenopodinae</taxon>
        <taxon>Xenopus</taxon>
        <taxon>Xenopus</taxon>
    </lineage>
</organism>
<reference key="1">
    <citation type="submission" date="2006-12" db="EMBL/GenBank/DDBJ databases">
        <authorList>
            <consortium name="NIH - Xenopus Gene Collection (XGC) project"/>
        </authorList>
    </citation>
    <scope>NUCLEOTIDE SEQUENCE [LARGE SCALE MRNA]</scope>
    <source>
        <tissue>Ovary</tissue>
    </source>
</reference>
<feature type="chain" id="PRO_0000330836" description="Biogenesis of lysosome-related organelles complex 1 subunit 5">
    <location>
        <begin position="1"/>
        <end position="188"/>
    </location>
</feature>
<feature type="region of interest" description="Disordered" evidence="3">
    <location>
        <begin position="1"/>
        <end position="24"/>
    </location>
</feature>
<feature type="coiled-coil region" evidence="2">
    <location>
        <begin position="101"/>
        <end position="183"/>
    </location>
</feature>
<feature type="compositionally biased region" description="Polar residues" evidence="3">
    <location>
        <begin position="10"/>
        <end position="19"/>
    </location>
</feature>
<comment type="function">
    <text evidence="1">Component of the BLOC-1 complex, a complex that is required for normal biogenesis of lysosome-related organelles (LRO), such as platelet dense granules and melanosomes. Plays a role in intracellular vesicle trafficking (By similarity).</text>
</comment>
<comment type="subunit">
    <text evidence="1">Component of the biogenesis of lysosome-related organelles complex 1 (BLOC-1).</text>
</comment>
<comment type="similarity">
    <text evidence="4">Belongs to the BLOC1S5 family.</text>
</comment>
<name>BL1S5_XENLA</name>
<accession>A1L3H4</accession>
<keyword id="KW-0175">Coiled coil</keyword>
<keyword id="KW-1185">Reference proteome</keyword>